<gene>
    <name type="primary">MRTO4</name>
    <name type="synonym">C1orf33</name>
    <name type="synonym">MRT4</name>
</gene>
<protein>
    <recommendedName>
        <fullName evidence="1">mRNA turnover protein 4 homolog</fullName>
    </recommendedName>
    <alternativeName>
        <fullName evidence="1 7">Ribosome assembly factor MRTO4</fullName>
    </alternativeName>
</protein>
<reference key="1">
    <citation type="submission" date="1999-07" db="EMBL/GenBank/DDBJ databases">
        <authorList>
            <person name="Ge H."/>
        </authorList>
    </citation>
    <scope>NUCLEOTIDE SEQUENCE [MRNA]</scope>
</reference>
<reference key="2">
    <citation type="submission" date="2003-05" db="EMBL/GenBank/DDBJ databases">
        <authorList>
            <person name="Zou S.W."/>
            <person name="Miao S.Y."/>
            <person name="Zhang X.D."/>
            <person name="Qiao Y."/>
            <person name="Wang L.F."/>
        </authorList>
    </citation>
    <scope>NUCLEOTIDE SEQUENCE [LARGE SCALE MRNA]</scope>
    <source>
        <tissue>Testis</tissue>
    </source>
</reference>
<reference key="3">
    <citation type="journal article" date="2004" name="Nat. Genet.">
        <title>Complete sequencing and characterization of 21,243 full-length human cDNAs.</title>
        <authorList>
            <person name="Ota T."/>
            <person name="Suzuki Y."/>
            <person name="Nishikawa T."/>
            <person name="Otsuki T."/>
            <person name="Sugiyama T."/>
            <person name="Irie R."/>
            <person name="Wakamatsu A."/>
            <person name="Hayashi K."/>
            <person name="Sato H."/>
            <person name="Nagai K."/>
            <person name="Kimura K."/>
            <person name="Makita H."/>
            <person name="Sekine M."/>
            <person name="Obayashi M."/>
            <person name="Nishi T."/>
            <person name="Shibahara T."/>
            <person name="Tanaka T."/>
            <person name="Ishii S."/>
            <person name="Yamamoto J."/>
            <person name="Saito K."/>
            <person name="Kawai Y."/>
            <person name="Isono Y."/>
            <person name="Nakamura Y."/>
            <person name="Nagahari K."/>
            <person name="Murakami K."/>
            <person name="Yasuda T."/>
            <person name="Iwayanagi T."/>
            <person name="Wagatsuma M."/>
            <person name="Shiratori A."/>
            <person name="Sudo H."/>
            <person name="Hosoiri T."/>
            <person name="Kaku Y."/>
            <person name="Kodaira H."/>
            <person name="Kondo H."/>
            <person name="Sugawara M."/>
            <person name="Takahashi M."/>
            <person name="Kanda K."/>
            <person name="Yokoi T."/>
            <person name="Furuya T."/>
            <person name="Kikkawa E."/>
            <person name="Omura Y."/>
            <person name="Abe K."/>
            <person name="Kamihara K."/>
            <person name="Katsuta N."/>
            <person name="Sato K."/>
            <person name="Tanikawa M."/>
            <person name="Yamazaki M."/>
            <person name="Ninomiya K."/>
            <person name="Ishibashi T."/>
            <person name="Yamashita H."/>
            <person name="Murakawa K."/>
            <person name="Fujimori K."/>
            <person name="Tanai H."/>
            <person name="Kimata M."/>
            <person name="Watanabe M."/>
            <person name="Hiraoka S."/>
            <person name="Chiba Y."/>
            <person name="Ishida S."/>
            <person name="Ono Y."/>
            <person name="Takiguchi S."/>
            <person name="Watanabe S."/>
            <person name="Yosida M."/>
            <person name="Hotuta T."/>
            <person name="Kusano J."/>
            <person name="Kanehori K."/>
            <person name="Takahashi-Fujii A."/>
            <person name="Hara H."/>
            <person name="Tanase T.-O."/>
            <person name="Nomura Y."/>
            <person name="Togiya S."/>
            <person name="Komai F."/>
            <person name="Hara R."/>
            <person name="Takeuchi K."/>
            <person name="Arita M."/>
            <person name="Imose N."/>
            <person name="Musashino K."/>
            <person name="Yuuki H."/>
            <person name="Oshima A."/>
            <person name="Sasaki N."/>
            <person name="Aotsuka S."/>
            <person name="Yoshikawa Y."/>
            <person name="Matsunawa H."/>
            <person name="Ichihara T."/>
            <person name="Shiohata N."/>
            <person name="Sano S."/>
            <person name="Moriya S."/>
            <person name="Momiyama H."/>
            <person name="Satoh N."/>
            <person name="Takami S."/>
            <person name="Terashima Y."/>
            <person name="Suzuki O."/>
            <person name="Nakagawa S."/>
            <person name="Senoh A."/>
            <person name="Mizoguchi H."/>
            <person name="Goto Y."/>
            <person name="Shimizu F."/>
            <person name="Wakebe H."/>
            <person name="Hishigaki H."/>
            <person name="Watanabe T."/>
            <person name="Sugiyama A."/>
            <person name="Takemoto M."/>
            <person name="Kawakami B."/>
            <person name="Yamazaki M."/>
            <person name="Watanabe K."/>
            <person name="Kumagai A."/>
            <person name="Itakura S."/>
            <person name="Fukuzumi Y."/>
            <person name="Fujimori Y."/>
            <person name="Komiyama M."/>
            <person name="Tashiro H."/>
            <person name="Tanigami A."/>
            <person name="Fujiwara T."/>
            <person name="Ono T."/>
            <person name="Yamada K."/>
            <person name="Fujii Y."/>
            <person name="Ozaki K."/>
            <person name="Hirao M."/>
            <person name="Ohmori Y."/>
            <person name="Kawabata A."/>
            <person name="Hikiji T."/>
            <person name="Kobatake N."/>
            <person name="Inagaki H."/>
            <person name="Ikema Y."/>
            <person name="Okamoto S."/>
            <person name="Okitani R."/>
            <person name="Kawakami T."/>
            <person name="Noguchi S."/>
            <person name="Itoh T."/>
            <person name="Shigeta K."/>
            <person name="Senba T."/>
            <person name="Matsumura K."/>
            <person name="Nakajima Y."/>
            <person name="Mizuno T."/>
            <person name="Morinaga M."/>
            <person name="Sasaki M."/>
            <person name="Togashi T."/>
            <person name="Oyama M."/>
            <person name="Hata H."/>
            <person name="Watanabe M."/>
            <person name="Komatsu T."/>
            <person name="Mizushima-Sugano J."/>
            <person name="Satoh T."/>
            <person name="Shirai Y."/>
            <person name="Takahashi Y."/>
            <person name="Nakagawa K."/>
            <person name="Okumura K."/>
            <person name="Nagase T."/>
            <person name="Nomura N."/>
            <person name="Kikuchi H."/>
            <person name="Masuho Y."/>
            <person name="Yamashita R."/>
            <person name="Nakai K."/>
            <person name="Yada T."/>
            <person name="Nakamura Y."/>
            <person name="Ohara O."/>
            <person name="Isogai T."/>
            <person name="Sugano S."/>
        </authorList>
    </citation>
    <scope>NUCLEOTIDE SEQUENCE [LARGE SCALE MRNA]</scope>
</reference>
<reference key="4">
    <citation type="journal article" date="2006" name="Nature">
        <title>The DNA sequence and biological annotation of human chromosome 1.</title>
        <authorList>
            <person name="Gregory S.G."/>
            <person name="Barlow K.F."/>
            <person name="McLay K.E."/>
            <person name="Kaul R."/>
            <person name="Swarbreck D."/>
            <person name="Dunham A."/>
            <person name="Scott C.E."/>
            <person name="Howe K.L."/>
            <person name="Woodfine K."/>
            <person name="Spencer C.C.A."/>
            <person name="Jones M.C."/>
            <person name="Gillson C."/>
            <person name="Searle S."/>
            <person name="Zhou Y."/>
            <person name="Kokocinski F."/>
            <person name="McDonald L."/>
            <person name="Evans R."/>
            <person name="Phillips K."/>
            <person name="Atkinson A."/>
            <person name="Cooper R."/>
            <person name="Jones C."/>
            <person name="Hall R.E."/>
            <person name="Andrews T.D."/>
            <person name="Lloyd C."/>
            <person name="Ainscough R."/>
            <person name="Almeida J.P."/>
            <person name="Ambrose K.D."/>
            <person name="Anderson F."/>
            <person name="Andrew R.W."/>
            <person name="Ashwell R.I.S."/>
            <person name="Aubin K."/>
            <person name="Babbage A.K."/>
            <person name="Bagguley C.L."/>
            <person name="Bailey J."/>
            <person name="Beasley H."/>
            <person name="Bethel G."/>
            <person name="Bird C.P."/>
            <person name="Bray-Allen S."/>
            <person name="Brown J.Y."/>
            <person name="Brown A.J."/>
            <person name="Buckley D."/>
            <person name="Burton J."/>
            <person name="Bye J."/>
            <person name="Carder C."/>
            <person name="Chapman J.C."/>
            <person name="Clark S.Y."/>
            <person name="Clarke G."/>
            <person name="Clee C."/>
            <person name="Cobley V."/>
            <person name="Collier R.E."/>
            <person name="Corby N."/>
            <person name="Coville G.J."/>
            <person name="Davies J."/>
            <person name="Deadman R."/>
            <person name="Dunn M."/>
            <person name="Earthrowl M."/>
            <person name="Ellington A.G."/>
            <person name="Errington H."/>
            <person name="Frankish A."/>
            <person name="Frankland J."/>
            <person name="French L."/>
            <person name="Garner P."/>
            <person name="Garnett J."/>
            <person name="Gay L."/>
            <person name="Ghori M.R.J."/>
            <person name="Gibson R."/>
            <person name="Gilby L.M."/>
            <person name="Gillett W."/>
            <person name="Glithero R.J."/>
            <person name="Grafham D.V."/>
            <person name="Griffiths C."/>
            <person name="Griffiths-Jones S."/>
            <person name="Grocock R."/>
            <person name="Hammond S."/>
            <person name="Harrison E.S.I."/>
            <person name="Hart E."/>
            <person name="Haugen E."/>
            <person name="Heath P.D."/>
            <person name="Holmes S."/>
            <person name="Holt K."/>
            <person name="Howden P.J."/>
            <person name="Hunt A.R."/>
            <person name="Hunt S.E."/>
            <person name="Hunter G."/>
            <person name="Isherwood J."/>
            <person name="James R."/>
            <person name="Johnson C."/>
            <person name="Johnson D."/>
            <person name="Joy A."/>
            <person name="Kay M."/>
            <person name="Kershaw J.K."/>
            <person name="Kibukawa M."/>
            <person name="Kimberley A.M."/>
            <person name="King A."/>
            <person name="Knights A.J."/>
            <person name="Lad H."/>
            <person name="Laird G."/>
            <person name="Lawlor S."/>
            <person name="Leongamornlert D.A."/>
            <person name="Lloyd D.M."/>
            <person name="Loveland J."/>
            <person name="Lovell J."/>
            <person name="Lush M.J."/>
            <person name="Lyne R."/>
            <person name="Martin S."/>
            <person name="Mashreghi-Mohammadi M."/>
            <person name="Matthews L."/>
            <person name="Matthews N.S.W."/>
            <person name="McLaren S."/>
            <person name="Milne S."/>
            <person name="Mistry S."/>
            <person name="Moore M.J.F."/>
            <person name="Nickerson T."/>
            <person name="O'Dell C.N."/>
            <person name="Oliver K."/>
            <person name="Palmeiri A."/>
            <person name="Palmer S.A."/>
            <person name="Parker A."/>
            <person name="Patel D."/>
            <person name="Pearce A.V."/>
            <person name="Peck A.I."/>
            <person name="Pelan S."/>
            <person name="Phelps K."/>
            <person name="Phillimore B.J."/>
            <person name="Plumb R."/>
            <person name="Rajan J."/>
            <person name="Raymond C."/>
            <person name="Rouse G."/>
            <person name="Saenphimmachak C."/>
            <person name="Sehra H.K."/>
            <person name="Sheridan E."/>
            <person name="Shownkeen R."/>
            <person name="Sims S."/>
            <person name="Skuce C.D."/>
            <person name="Smith M."/>
            <person name="Steward C."/>
            <person name="Subramanian S."/>
            <person name="Sycamore N."/>
            <person name="Tracey A."/>
            <person name="Tromans A."/>
            <person name="Van Helmond Z."/>
            <person name="Wall M."/>
            <person name="Wallis J.M."/>
            <person name="White S."/>
            <person name="Whitehead S.L."/>
            <person name="Wilkinson J.E."/>
            <person name="Willey D.L."/>
            <person name="Williams H."/>
            <person name="Wilming L."/>
            <person name="Wray P.W."/>
            <person name="Wu Z."/>
            <person name="Coulson A."/>
            <person name="Vaudin M."/>
            <person name="Sulston J.E."/>
            <person name="Durbin R.M."/>
            <person name="Hubbard T."/>
            <person name="Wooster R."/>
            <person name="Dunham I."/>
            <person name="Carter N.P."/>
            <person name="McVean G."/>
            <person name="Ross M.T."/>
            <person name="Harrow J."/>
            <person name="Olson M.V."/>
            <person name="Beck S."/>
            <person name="Rogers J."/>
            <person name="Bentley D.R."/>
        </authorList>
    </citation>
    <scope>NUCLEOTIDE SEQUENCE [LARGE SCALE GENOMIC DNA]</scope>
</reference>
<reference key="5">
    <citation type="submission" date="2005-07" db="EMBL/GenBank/DDBJ databases">
        <authorList>
            <person name="Mural R.J."/>
            <person name="Istrail S."/>
            <person name="Sutton G.G."/>
            <person name="Florea L."/>
            <person name="Halpern A.L."/>
            <person name="Mobarry C.M."/>
            <person name="Lippert R."/>
            <person name="Walenz B."/>
            <person name="Shatkay H."/>
            <person name="Dew I."/>
            <person name="Miller J.R."/>
            <person name="Flanigan M.J."/>
            <person name="Edwards N.J."/>
            <person name="Bolanos R."/>
            <person name="Fasulo D."/>
            <person name="Halldorsson B.V."/>
            <person name="Hannenhalli S."/>
            <person name="Turner R."/>
            <person name="Yooseph S."/>
            <person name="Lu F."/>
            <person name="Nusskern D.R."/>
            <person name="Shue B.C."/>
            <person name="Zheng X.H."/>
            <person name="Zhong F."/>
            <person name="Delcher A.L."/>
            <person name="Huson D.H."/>
            <person name="Kravitz S.A."/>
            <person name="Mouchard L."/>
            <person name="Reinert K."/>
            <person name="Remington K.A."/>
            <person name="Clark A.G."/>
            <person name="Waterman M.S."/>
            <person name="Eichler E.E."/>
            <person name="Adams M.D."/>
            <person name="Hunkapiller M.W."/>
            <person name="Myers E.W."/>
            <person name="Venter J.C."/>
        </authorList>
    </citation>
    <scope>NUCLEOTIDE SEQUENCE [LARGE SCALE GENOMIC DNA]</scope>
</reference>
<reference key="6">
    <citation type="journal article" date="2004" name="Genome Res.">
        <title>The status, quality, and expansion of the NIH full-length cDNA project: the Mammalian Gene Collection (MGC).</title>
        <authorList>
            <consortium name="The MGC Project Team"/>
        </authorList>
    </citation>
    <scope>NUCLEOTIDE SEQUENCE [LARGE SCALE MRNA]</scope>
    <source>
        <tissue>Lung</tissue>
    </source>
</reference>
<reference key="7">
    <citation type="journal article" date="2002" name="Mol. Biol. Cell">
        <title>Functional proteomic analysis of human nucleolus.</title>
        <authorList>
            <person name="Scherl A."/>
            <person name="Coute Y."/>
            <person name="Deon C."/>
            <person name="Calle A."/>
            <person name="Kindbeiter K."/>
            <person name="Sanchez J.-C."/>
            <person name="Greco A."/>
            <person name="Hochstrasser D.F."/>
            <person name="Diaz J.-J."/>
        </authorList>
    </citation>
    <scope>SUBCELLULAR LOCATION [LARGE SCALE ANALYSIS]</scope>
    <source>
        <tissue>Cervix carcinoma</tissue>
    </source>
</reference>
<reference key="8">
    <citation type="journal article" date="2010" name="Int. J. Biochem. Cell Biol.">
        <title>Subcellular localization of ribosomal P0-like protein MRT4 is determined by its N-terminal domain.</title>
        <authorList>
            <person name="Michalec B."/>
            <person name="Krokowski D."/>
            <person name="Grela P."/>
            <person name="Wawiorka L."/>
            <person name="Sawa-Makarska J."/>
            <person name="Grankowski N."/>
            <person name="Tchorzewski M."/>
        </authorList>
    </citation>
    <scope>FUNCTION</scope>
    <scope>SUBUNIT</scope>
    <scope>SUBCELLULAR LOCATION</scope>
</reference>
<reference key="9">
    <citation type="journal article" date="2011" name="BMC Syst. Biol.">
        <title>Initial characterization of the human central proteome.</title>
        <authorList>
            <person name="Burkard T.R."/>
            <person name="Planyavsky M."/>
            <person name="Kaupe I."/>
            <person name="Breitwieser F.P."/>
            <person name="Buerckstuemmer T."/>
            <person name="Bennett K.L."/>
            <person name="Superti-Furga G."/>
            <person name="Colinge J."/>
        </authorList>
    </citation>
    <scope>IDENTIFICATION BY MASS SPECTROMETRY [LARGE SCALE ANALYSIS]</scope>
</reference>
<reference key="10">
    <citation type="journal article" date="2013" name="J. Proteome Res.">
        <title>Toward a comprehensive characterization of a human cancer cell phosphoproteome.</title>
        <authorList>
            <person name="Zhou H."/>
            <person name="Di Palma S."/>
            <person name="Preisinger C."/>
            <person name="Peng M."/>
            <person name="Polat A.N."/>
            <person name="Heck A.J."/>
            <person name="Mohammed S."/>
        </authorList>
    </citation>
    <scope>IDENTIFICATION BY MASS SPECTROMETRY [LARGE SCALE ANALYSIS]</scope>
    <source>
        <tissue>Cervix carcinoma</tissue>
        <tissue>Erythroleukemia</tissue>
    </source>
</reference>
<reference key="11">
    <citation type="journal article" date="2022" name="Nat. Chem. Biol.">
        <title>Nascent alt-protein chemoproteomics reveals a pre-60S assembly checkpoint inhibitor.</title>
        <authorList>
            <person name="Cao X."/>
            <person name="Khitun A."/>
            <person name="Harold C.M."/>
            <person name="Bryant C.J."/>
            <person name="Zheng S.J."/>
            <person name="Baserga S.J."/>
            <person name="Slavoff S.A."/>
        </authorList>
    </citation>
    <scope>INTERACTION WITH MINAS-60</scope>
</reference>
<sequence length="239" mass="27560">MPKSKRDKKVSLTKTAKKGLELKQNLIEELRKCVDTYKYLFIFSVANMRNSKLKDIRNAWKHSRMFFGKNKVMMVALGRSPSDEYKDNLHQVSKRLRGEVGLLFTNRTKEEVNEWFTKYTEMDYARAGNKAAFTVSLDPGPLEQFPHSMEPQLRQLGLPTALKRGVVTLLSDYEVCKEGDVLTPEQARVLKLFGYEMAEFKVTIKYMWDSQSGRFQQMGDDLPESASESTEESDSEDDD</sequence>
<feature type="chain" id="PRO_0000154816" description="mRNA turnover protein 4 homolog">
    <location>
        <begin position="1"/>
        <end position="239"/>
    </location>
</feature>
<feature type="region of interest" description="Disordered" evidence="3">
    <location>
        <begin position="215"/>
        <end position="239"/>
    </location>
</feature>
<feature type="compositionally biased region" description="Acidic residues" evidence="3">
    <location>
        <begin position="229"/>
        <end position="239"/>
    </location>
</feature>
<feature type="modified residue" description="Phosphoserine" evidence="2">
    <location>
        <position position="225"/>
    </location>
</feature>
<feature type="modified residue" description="Phosphoserine" evidence="2">
    <location>
        <position position="229"/>
    </location>
</feature>
<feature type="modified residue" description="Phosphoserine" evidence="2">
    <location>
        <position position="233"/>
    </location>
</feature>
<feature type="sequence conflict" description="In Ref. 1; AAD52608." evidence="7" ref="1">
    <original>R</original>
    <variation>T</variation>
    <location>
        <position position="95"/>
    </location>
</feature>
<feature type="sequence conflict" description="In Ref. 3; BAB55205." evidence="7" ref="3">
    <original>S</original>
    <variation>L</variation>
    <location>
        <position position="235"/>
    </location>
</feature>
<comment type="function">
    <text evidence="5">Component of the ribosome assembly machinery. Nuclear paralog of the ribosomal protein P0, it binds pre-60S subunits at an early stage of assembly in the nucleolus, and is replaced by P0 in cytoplasmic pre-60S subunits and mature 80S ribosomes.</text>
</comment>
<comment type="subunit">
    <text evidence="5 6">Associates with the pre-60S ribosomal particle (PubMed:20083226). Interacts with MINAS-60 (product of an alternative open reading frame of RBM10) (PubMed:35393574).</text>
</comment>
<comment type="interaction">
    <interactant intactId="EBI-1046493">
        <id>Q9UKD2</id>
    </interactant>
    <interactant intactId="EBI-750109">
        <id>Q9NYB0</id>
        <label>TERF2IP</label>
    </interactant>
    <organismsDiffer>false</organismsDiffer>
    <experiments>2</experiments>
</comment>
<comment type="subcellular location">
    <subcellularLocation>
        <location evidence="4 5">Nucleus</location>
        <location evidence="4 5">Nucleolus</location>
    </subcellularLocation>
    <subcellularLocation>
        <location evidence="5">Cytoplasm</location>
    </subcellularLocation>
    <text evidence="5">Shuttles between the nucleus and the cytoplasm.</text>
</comment>
<comment type="similarity">
    <text evidence="7">Belongs to the universal ribosomal protein uL10 family.</text>
</comment>
<organism>
    <name type="scientific">Homo sapiens</name>
    <name type="common">Human</name>
    <dbReference type="NCBI Taxonomy" id="9606"/>
    <lineage>
        <taxon>Eukaryota</taxon>
        <taxon>Metazoa</taxon>
        <taxon>Chordata</taxon>
        <taxon>Craniata</taxon>
        <taxon>Vertebrata</taxon>
        <taxon>Euteleostomi</taxon>
        <taxon>Mammalia</taxon>
        <taxon>Eutheria</taxon>
        <taxon>Euarchontoglires</taxon>
        <taxon>Primates</taxon>
        <taxon>Haplorrhini</taxon>
        <taxon>Catarrhini</taxon>
        <taxon>Hominidae</taxon>
        <taxon>Homo</taxon>
    </lineage>
</organism>
<evidence type="ECO:0000250" key="1">
    <source>
        <dbReference type="UniProtKB" id="P33201"/>
    </source>
</evidence>
<evidence type="ECO:0000250" key="2">
    <source>
        <dbReference type="UniProtKB" id="Q9D0I8"/>
    </source>
</evidence>
<evidence type="ECO:0000256" key="3">
    <source>
        <dbReference type="SAM" id="MobiDB-lite"/>
    </source>
</evidence>
<evidence type="ECO:0000269" key="4">
    <source>
    </source>
</evidence>
<evidence type="ECO:0000269" key="5">
    <source>
    </source>
</evidence>
<evidence type="ECO:0000269" key="6">
    <source>
    </source>
</evidence>
<evidence type="ECO:0000305" key="7"/>
<name>MRT4_HUMAN</name>
<proteinExistence type="evidence at protein level"/>
<keyword id="KW-0002">3D-structure</keyword>
<keyword id="KW-0963">Cytoplasm</keyword>
<keyword id="KW-0539">Nucleus</keyword>
<keyword id="KW-0597">Phosphoprotein</keyword>
<keyword id="KW-1267">Proteomics identification</keyword>
<keyword id="KW-1185">Reference proteome</keyword>
<keyword id="KW-0690">Ribosome biogenesis</keyword>
<accession>Q9UKD2</accession>
<accession>B3KNB3</accession>
<accession>Q5TG55</accession>
<accession>Q96SS6</accession>
<accession>Q9BPV9</accession>
<dbReference type="EMBL" id="AF173378">
    <property type="protein sequence ID" value="AAD52608.1"/>
    <property type="molecule type" value="mRNA"/>
</dbReference>
<dbReference type="EMBL" id="AY303790">
    <property type="protein sequence ID" value="AAP68821.1"/>
    <property type="molecule type" value="mRNA"/>
</dbReference>
<dbReference type="EMBL" id="AK024227">
    <property type="protein sequence ID" value="BAG51275.1"/>
    <property type="molecule type" value="mRNA"/>
</dbReference>
<dbReference type="EMBL" id="AK027569">
    <property type="protein sequence ID" value="BAB55205.1"/>
    <property type="molecule type" value="mRNA"/>
</dbReference>
<dbReference type="EMBL" id="AL035413">
    <property type="status" value="NOT_ANNOTATED_CDS"/>
    <property type="molecule type" value="Genomic_DNA"/>
</dbReference>
<dbReference type="EMBL" id="CH471134">
    <property type="protein sequence ID" value="EAW94873.1"/>
    <property type="molecule type" value="Genomic_DNA"/>
</dbReference>
<dbReference type="EMBL" id="BC003013">
    <property type="protein sequence ID" value="AAH03013.1"/>
    <property type="molecule type" value="mRNA"/>
</dbReference>
<dbReference type="EMBL" id="BC006504">
    <property type="protein sequence ID" value="AAH06504.1"/>
    <property type="molecule type" value="mRNA"/>
</dbReference>
<dbReference type="CCDS" id="CCDS191.1"/>
<dbReference type="RefSeq" id="NP_057267.2">
    <property type="nucleotide sequence ID" value="NM_016183.3"/>
</dbReference>
<dbReference type="PDB" id="8FKR">
    <property type="method" value="EM"/>
    <property type="resolution" value="2.89 A"/>
    <property type="chains" value="SQ=1-239"/>
</dbReference>
<dbReference type="PDB" id="8FKS">
    <property type="method" value="EM"/>
    <property type="resolution" value="2.88 A"/>
    <property type="chains" value="SQ=1-239"/>
</dbReference>
<dbReference type="PDB" id="8FKT">
    <property type="method" value="EM"/>
    <property type="resolution" value="2.81 A"/>
    <property type="chains" value="SQ=1-239"/>
</dbReference>
<dbReference type="PDB" id="8FKU">
    <property type="method" value="EM"/>
    <property type="resolution" value="2.82 A"/>
    <property type="chains" value="SQ=1-239"/>
</dbReference>
<dbReference type="PDB" id="8FKV">
    <property type="method" value="EM"/>
    <property type="resolution" value="2.47 A"/>
    <property type="chains" value="SQ=1-239"/>
</dbReference>
<dbReference type="PDB" id="8FKW">
    <property type="method" value="EM"/>
    <property type="resolution" value="2.50 A"/>
    <property type="chains" value="SQ=1-239"/>
</dbReference>
<dbReference type="PDB" id="8FKX">
    <property type="method" value="EM"/>
    <property type="resolution" value="2.59 A"/>
    <property type="chains" value="SQ=1-239"/>
</dbReference>
<dbReference type="PDB" id="8FKY">
    <property type="method" value="EM"/>
    <property type="resolution" value="2.67 A"/>
    <property type="chains" value="SQ=1-239"/>
</dbReference>
<dbReference type="PDB" id="8FKZ">
    <property type="method" value="EM"/>
    <property type="resolution" value="3.04 A"/>
    <property type="chains" value="SQ=1-239"/>
</dbReference>
<dbReference type="PDB" id="8FL0">
    <property type="method" value="EM"/>
    <property type="resolution" value="2.91 A"/>
    <property type="chains" value="SQ=1-239"/>
</dbReference>
<dbReference type="PDB" id="8FL2">
    <property type="method" value="EM"/>
    <property type="resolution" value="2.67 A"/>
    <property type="chains" value="SQ=1-239"/>
</dbReference>
<dbReference type="PDB" id="8FL3">
    <property type="method" value="EM"/>
    <property type="resolution" value="2.53 A"/>
    <property type="chains" value="SQ=1-239"/>
</dbReference>
<dbReference type="PDB" id="8FL4">
    <property type="method" value="EM"/>
    <property type="resolution" value="2.89 A"/>
    <property type="chains" value="SQ=1-239"/>
</dbReference>
<dbReference type="PDB" id="8FL6">
    <property type="method" value="EM"/>
    <property type="resolution" value="2.62 A"/>
    <property type="chains" value="SQ=1-239"/>
</dbReference>
<dbReference type="PDB" id="8FL7">
    <property type="method" value="EM"/>
    <property type="resolution" value="2.55 A"/>
    <property type="chains" value="SQ=1-239"/>
</dbReference>
<dbReference type="PDB" id="8FL9">
    <property type="method" value="EM"/>
    <property type="resolution" value="2.75 A"/>
    <property type="chains" value="SQ=1-239"/>
</dbReference>
<dbReference type="PDB" id="8FLA">
    <property type="method" value="EM"/>
    <property type="resolution" value="2.63 A"/>
    <property type="chains" value="SQ=1-239"/>
</dbReference>
<dbReference type="PDB" id="8FLB">
    <property type="method" value="EM"/>
    <property type="resolution" value="2.55 A"/>
    <property type="chains" value="SQ=1-239"/>
</dbReference>
<dbReference type="PDB" id="8FLC">
    <property type="method" value="EM"/>
    <property type="resolution" value="2.76 A"/>
    <property type="chains" value="SQ=1-239"/>
</dbReference>
<dbReference type="PDB" id="8FLD">
    <property type="method" value="EM"/>
    <property type="resolution" value="2.58 A"/>
    <property type="chains" value="SQ=1-239"/>
</dbReference>
<dbReference type="PDB" id="8FLE">
    <property type="method" value="EM"/>
    <property type="resolution" value="2.48 A"/>
    <property type="chains" value="SQ=1-239"/>
</dbReference>
<dbReference type="PDB" id="8FLF">
    <property type="method" value="EM"/>
    <property type="resolution" value="2.65 A"/>
    <property type="chains" value="SQ=1-239"/>
</dbReference>
<dbReference type="PDB" id="8IDT">
    <property type="method" value="EM"/>
    <property type="resolution" value="2.80 A"/>
    <property type="chains" value="J=1-239"/>
</dbReference>
<dbReference type="PDB" id="8IDY">
    <property type="method" value="EM"/>
    <property type="resolution" value="3.00 A"/>
    <property type="chains" value="J=1-239"/>
</dbReference>
<dbReference type="PDB" id="8IE3">
    <property type="method" value="EM"/>
    <property type="resolution" value="3.30 A"/>
    <property type="chains" value="J=1-239"/>
</dbReference>
<dbReference type="PDB" id="8INE">
    <property type="method" value="EM"/>
    <property type="resolution" value="3.20 A"/>
    <property type="chains" value="J=1-239"/>
</dbReference>
<dbReference type="PDB" id="8INF">
    <property type="method" value="EM"/>
    <property type="resolution" value="3.00 A"/>
    <property type="chains" value="J=1-239"/>
</dbReference>
<dbReference type="PDB" id="8INK">
    <property type="method" value="EM"/>
    <property type="resolution" value="3.20 A"/>
    <property type="chains" value="v=1-239"/>
</dbReference>
<dbReference type="PDB" id="8IPD">
    <property type="method" value="EM"/>
    <property type="resolution" value="3.20 A"/>
    <property type="chains" value="v=1-239"/>
</dbReference>
<dbReference type="PDB" id="8IPX">
    <property type="method" value="EM"/>
    <property type="resolution" value="4.30 A"/>
    <property type="chains" value="v=1-239"/>
</dbReference>
<dbReference type="PDB" id="8IPY">
    <property type="method" value="EM"/>
    <property type="resolution" value="3.20 A"/>
    <property type="chains" value="v=1-239"/>
</dbReference>
<dbReference type="PDB" id="8IR1">
    <property type="method" value="EM"/>
    <property type="resolution" value="3.30 A"/>
    <property type="chains" value="v=1-239"/>
</dbReference>
<dbReference type="PDB" id="8IR3">
    <property type="method" value="EM"/>
    <property type="resolution" value="3.50 A"/>
    <property type="chains" value="v=1-239"/>
</dbReference>
<dbReference type="PDB" id="8RL2">
    <property type="method" value="EM"/>
    <property type="resolution" value="2.84 A"/>
    <property type="chains" value="CF=1-239"/>
</dbReference>
<dbReference type="PDBsum" id="8FKR"/>
<dbReference type="PDBsum" id="8FKS"/>
<dbReference type="PDBsum" id="8FKT"/>
<dbReference type="PDBsum" id="8FKU"/>
<dbReference type="PDBsum" id="8FKV"/>
<dbReference type="PDBsum" id="8FKW"/>
<dbReference type="PDBsum" id="8FKX"/>
<dbReference type="PDBsum" id="8FKY"/>
<dbReference type="PDBsum" id="8FKZ"/>
<dbReference type="PDBsum" id="8FL0"/>
<dbReference type="PDBsum" id="8FL2"/>
<dbReference type="PDBsum" id="8FL3"/>
<dbReference type="PDBsum" id="8FL4"/>
<dbReference type="PDBsum" id="8FL6"/>
<dbReference type="PDBsum" id="8FL7"/>
<dbReference type="PDBsum" id="8FL9"/>
<dbReference type="PDBsum" id="8FLA"/>
<dbReference type="PDBsum" id="8FLB"/>
<dbReference type="PDBsum" id="8FLC"/>
<dbReference type="PDBsum" id="8FLD"/>
<dbReference type="PDBsum" id="8FLE"/>
<dbReference type="PDBsum" id="8FLF"/>
<dbReference type="PDBsum" id="8IDT"/>
<dbReference type="PDBsum" id="8IDY"/>
<dbReference type="PDBsum" id="8IE3"/>
<dbReference type="PDBsum" id="8INE"/>
<dbReference type="PDBsum" id="8INF"/>
<dbReference type="PDBsum" id="8INK"/>
<dbReference type="PDBsum" id="8IPD"/>
<dbReference type="PDBsum" id="8IPX"/>
<dbReference type="PDBsum" id="8IPY"/>
<dbReference type="PDBsum" id="8IR1"/>
<dbReference type="PDBsum" id="8IR3"/>
<dbReference type="PDBsum" id="8RL2"/>
<dbReference type="EMDB" id="EMD-19330"/>
<dbReference type="EMDB" id="EMD-29254"/>
<dbReference type="EMDB" id="EMD-29255"/>
<dbReference type="EMDB" id="EMD-29256"/>
<dbReference type="EMDB" id="EMD-29257"/>
<dbReference type="EMDB" id="EMD-29258"/>
<dbReference type="EMDB" id="EMD-29259"/>
<dbReference type="EMDB" id="EMD-29260"/>
<dbReference type="EMDB" id="EMD-29261"/>
<dbReference type="EMDB" id="EMD-29262"/>
<dbReference type="EMDB" id="EMD-29263"/>
<dbReference type="EMDB" id="EMD-29265"/>
<dbReference type="EMDB" id="EMD-29266"/>
<dbReference type="EMDB" id="EMD-29267"/>
<dbReference type="EMDB" id="EMD-29268"/>
<dbReference type="EMDB" id="EMD-29269"/>
<dbReference type="EMDB" id="EMD-29271"/>
<dbReference type="EMDB" id="EMD-29272"/>
<dbReference type="EMDB" id="EMD-29273"/>
<dbReference type="EMDB" id="EMD-29274"/>
<dbReference type="EMDB" id="EMD-29275"/>
<dbReference type="EMDB" id="EMD-29276"/>
<dbReference type="EMDB" id="EMD-29277"/>
<dbReference type="EMDB" id="EMD-35370"/>
<dbReference type="EMDB" id="EMD-35371"/>
<dbReference type="EMDB" id="EMD-35375"/>
<dbReference type="EMDB" id="EMD-35596"/>
<dbReference type="EMDB" id="EMD-35597"/>
<dbReference type="EMDB" id="EMD-35599"/>
<dbReference type="EMDB" id="EMD-35639"/>
<dbReference type="EMDB" id="EMD-35649"/>
<dbReference type="EMDB" id="EMD-35651"/>
<dbReference type="EMDB" id="EMD-35672"/>
<dbReference type="EMDB" id="EMD-35673"/>
<dbReference type="SMR" id="Q9UKD2"/>
<dbReference type="BioGRID" id="119337">
    <property type="interactions" value="192"/>
</dbReference>
<dbReference type="FunCoup" id="Q9UKD2">
    <property type="interactions" value="1915"/>
</dbReference>
<dbReference type="IntAct" id="Q9UKD2">
    <property type="interactions" value="87"/>
</dbReference>
<dbReference type="MINT" id="Q9UKD2"/>
<dbReference type="STRING" id="9606.ENSP00000364320"/>
<dbReference type="GlyGen" id="Q9UKD2">
    <property type="glycosylation" value="1 site, 1 O-linked glycan (1 site)"/>
</dbReference>
<dbReference type="iPTMnet" id="Q9UKD2"/>
<dbReference type="PhosphoSitePlus" id="Q9UKD2"/>
<dbReference type="SwissPalm" id="Q9UKD2"/>
<dbReference type="BioMuta" id="MRTO4"/>
<dbReference type="DMDM" id="51316541"/>
<dbReference type="jPOST" id="Q9UKD2"/>
<dbReference type="MassIVE" id="Q9UKD2"/>
<dbReference type="PaxDb" id="9606-ENSP00000364320"/>
<dbReference type="PeptideAtlas" id="Q9UKD2"/>
<dbReference type="ProteomicsDB" id="84768"/>
<dbReference type="Pumba" id="Q9UKD2"/>
<dbReference type="Antibodypedia" id="29590">
    <property type="antibodies" value="208 antibodies from 25 providers"/>
</dbReference>
<dbReference type="DNASU" id="51154"/>
<dbReference type="Ensembl" id="ENST00000330263.5">
    <property type="protein sequence ID" value="ENSP00000364320.3"/>
    <property type="gene ID" value="ENSG00000053372.5"/>
</dbReference>
<dbReference type="GeneID" id="51154"/>
<dbReference type="KEGG" id="hsa:51154"/>
<dbReference type="MANE-Select" id="ENST00000330263.5">
    <property type="protein sequence ID" value="ENSP00000364320.3"/>
    <property type="RefSeq nucleotide sequence ID" value="NM_016183.4"/>
    <property type="RefSeq protein sequence ID" value="NP_057267.2"/>
</dbReference>
<dbReference type="UCSC" id="uc001bbs.4">
    <property type="organism name" value="human"/>
</dbReference>
<dbReference type="AGR" id="HGNC:18477"/>
<dbReference type="CTD" id="51154"/>
<dbReference type="DisGeNET" id="51154"/>
<dbReference type="GeneCards" id="MRTO4"/>
<dbReference type="HGNC" id="HGNC:18477">
    <property type="gene designation" value="MRTO4"/>
</dbReference>
<dbReference type="HPA" id="ENSG00000053372">
    <property type="expression patterns" value="Low tissue specificity"/>
</dbReference>
<dbReference type="MIM" id="620476">
    <property type="type" value="gene"/>
</dbReference>
<dbReference type="neXtProt" id="NX_Q9UKD2"/>
<dbReference type="OpenTargets" id="ENSG00000053372"/>
<dbReference type="PharmGKB" id="PA162396216"/>
<dbReference type="VEuPathDB" id="HostDB:ENSG00000053372"/>
<dbReference type="eggNOG" id="KOG0816">
    <property type="taxonomic scope" value="Eukaryota"/>
</dbReference>
<dbReference type="GeneTree" id="ENSGT00390000006238"/>
<dbReference type="HOGENOM" id="CLU_071690_3_0_1"/>
<dbReference type="InParanoid" id="Q9UKD2"/>
<dbReference type="OMA" id="LEWAENY"/>
<dbReference type="OrthoDB" id="10262308at2759"/>
<dbReference type="PAN-GO" id="Q9UKD2">
    <property type="GO annotations" value="5 GO annotations based on evolutionary models"/>
</dbReference>
<dbReference type="PhylomeDB" id="Q9UKD2"/>
<dbReference type="TreeFam" id="TF300111"/>
<dbReference type="PathwayCommons" id="Q9UKD2"/>
<dbReference type="SignaLink" id="Q9UKD2"/>
<dbReference type="BioGRID-ORCS" id="51154">
    <property type="hits" value="623 hits in 1165 CRISPR screens"/>
</dbReference>
<dbReference type="CD-CODE" id="91857CE7">
    <property type="entry name" value="Nucleolus"/>
</dbReference>
<dbReference type="ChiTaRS" id="MRTO4">
    <property type="organism name" value="human"/>
</dbReference>
<dbReference type="GenomeRNAi" id="51154"/>
<dbReference type="Pharos" id="Q9UKD2">
    <property type="development level" value="Tbio"/>
</dbReference>
<dbReference type="PRO" id="PR:Q9UKD2"/>
<dbReference type="Proteomes" id="UP000005640">
    <property type="component" value="Chromosome 1"/>
</dbReference>
<dbReference type="RNAct" id="Q9UKD2">
    <property type="molecule type" value="protein"/>
</dbReference>
<dbReference type="Bgee" id="ENSG00000053372">
    <property type="expression patterns" value="Expressed in oocyte and 176 other cell types or tissues"/>
</dbReference>
<dbReference type="ExpressionAtlas" id="Q9UKD2">
    <property type="expression patterns" value="baseline and differential"/>
</dbReference>
<dbReference type="GO" id="GO:0005737">
    <property type="term" value="C:cytoplasm"/>
    <property type="evidence" value="ECO:0007669"/>
    <property type="project" value="UniProtKB-SubCell"/>
</dbReference>
<dbReference type="GO" id="GO:0005730">
    <property type="term" value="C:nucleolus"/>
    <property type="evidence" value="ECO:0000318"/>
    <property type="project" value="GO_Central"/>
</dbReference>
<dbReference type="GO" id="GO:0030687">
    <property type="term" value="C:preribosome, large subunit precursor"/>
    <property type="evidence" value="ECO:0000318"/>
    <property type="project" value="GO_Central"/>
</dbReference>
<dbReference type="GO" id="GO:0003723">
    <property type="term" value="F:RNA binding"/>
    <property type="evidence" value="ECO:0007005"/>
    <property type="project" value="UniProtKB"/>
</dbReference>
<dbReference type="GO" id="GO:0000956">
    <property type="term" value="P:nuclear-transcribed mRNA catabolic process"/>
    <property type="evidence" value="ECO:0000318"/>
    <property type="project" value="GO_Central"/>
</dbReference>
<dbReference type="GO" id="GO:0000027">
    <property type="term" value="P:ribosomal large subunit assembly"/>
    <property type="evidence" value="ECO:0007669"/>
    <property type="project" value="InterPro"/>
</dbReference>
<dbReference type="GO" id="GO:0042273">
    <property type="term" value="P:ribosomal large subunit biogenesis"/>
    <property type="evidence" value="ECO:0000318"/>
    <property type="project" value="GO_Central"/>
</dbReference>
<dbReference type="GO" id="GO:0006364">
    <property type="term" value="P:rRNA processing"/>
    <property type="evidence" value="ECO:0000318"/>
    <property type="project" value="GO_Central"/>
</dbReference>
<dbReference type="CDD" id="cd05796">
    <property type="entry name" value="Ribosomal_P0_like"/>
    <property type="match status" value="1"/>
</dbReference>
<dbReference type="FunFam" id="3.30.70.1730:FF:000004">
    <property type="entry name" value="Ribosome assembly factor mrt4"/>
    <property type="match status" value="1"/>
</dbReference>
<dbReference type="FunFam" id="3.90.105.20:FF:000002">
    <property type="entry name" value="Ribosome assembly factor mrt4"/>
    <property type="match status" value="1"/>
</dbReference>
<dbReference type="Gene3D" id="3.30.70.1730">
    <property type="match status" value="1"/>
</dbReference>
<dbReference type="Gene3D" id="3.90.105.20">
    <property type="match status" value="1"/>
</dbReference>
<dbReference type="InterPro" id="IPR033867">
    <property type="entry name" value="Mrt4"/>
</dbReference>
<dbReference type="InterPro" id="IPR001790">
    <property type="entry name" value="Ribosomal_uL10"/>
</dbReference>
<dbReference type="InterPro" id="IPR040637">
    <property type="entry name" value="Ribosomal_uL10-like_insert"/>
</dbReference>
<dbReference type="InterPro" id="IPR043164">
    <property type="entry name" value="Ribosomal_uL10-like_insert_sf"/>
</dbReference>
<dbReference type="InterPro" id="IPR043141">
    <property type="entry name" value="Ribosomal_uL10-like_sf"/>
</dbReference>
<dbReference type="InterPro" id="IPR051742">
    <property type="entry name" value="Ribosome_Assembly_uL10"/>
</dbReference>
<dbReference type="PANTHER" id="PTHR45841:SF1">
    <property type="entry name" value="MRNA TURNOVER PROTEIN 4 HOMOLOG"/>
    <property type="match status" value="1"/>
</dbReference>
<dbReference type="PANTHER" id="PTHR45841">
    <property type="entry name" value="MRNA TURNOVER PROTEIN 4 MRTO4"/>
    <property type="match status" value="1"/>
</dbReference>
<dbReference type="Pfam" id="PF00466">
    <property type="entry name" value="Ribosomal_L10"/>
    <property type="match status" value="1"/>
</dbReference>
<dbReference type="Pfam" id="PF17777">
    <property type="entry name" value="RL10P_insert"/>
    <property type="match status" value="1"/>
</dbReference>
<dbReference type="SUPFAM" id="SSF160369">
    <property type="entry name" value="Ribosomal protein L10-like"/>
    <property type="match status" value="1"/>
</dbReference>